<accession>P85737</accession>
<comment type="function">
    <text evidence="1">Myoactive.</text>
</comment>
<comment type="subcellular location">
    <subcellularLocation>
        <location evidence="5">Secreted</location>
    </subcellularLocation>
</comment>
<comment type="similarity">
    <text evidence="2">Belongs to the pyrokinin family.</text>
</comment>
<keyword id="KW-0027">Amidation</keyword>
<keyword id="KW-0903">Direct protein sequencing</keyword>
<keyword id="KW-0527">Neuropeptide</keyword>
<keyword id="KW-0964">Secreted</keyword>
<protein>
    <recommendedName>
        <fullName evidence="1">Pyrokinin-5</fullName>
    </recommendedName>
    <alternativeName>
        <fullName evidence="1">FXPRL-amide</fullName>
    </alternativeName>
    <alternativeName>
        <fullName evidence="4">PilDu-Capa-PK</fullName>
    </alternativeName>
</protein>
<reference evidence="5" key="1">
    <citation type="journal article" date="2009" name="BMC Evol. Biol.">
        <title>A proteomic approach for studying insect phylogeny: CAPA peptides of ancient insect taxa (Dictyoptera, Blattoptera) as a test case.</title>
        <authorList>
            <person name="Roth S."/>
            <person name="Fromm B."/>
            <person name="Gaede G."/>
            <person name="Predel R."/>
        </authorList>
    </citation>
    <scope>PROTEIN SEQUENCE</scope>
    <scope>AMIDATION AT LEU-17</scope>
    <source>
        <tissue evidence="3">Abdominal perisympathetic organs</tissue>
    </source>
</reference>
<evidence type="ECO:0000250" key="1">
    <source>
        <dbReference type="UniProtKB" id="P82617"/>
    </source>
</evidence>
<evidence type="ECO:0000255" key="2"/>
<evidence type="ECO:0000269" key="3">
    <source>
    </source>
</evidence>
<evidence type="ECO:0000303" key="4">
    <source>
    </source>
</evidence>
<evidence type="ECO:0000305" key="5"/>
<dbReference type="GO" id="GO:0005576">
    <property type="term" value="C:extracellular region"/>
    <property type="evidence" value="ECO:0007669"/>
    <property type="project" value="UniProtKB-SubCell"/>
</dbReference>
<dbReference type="GO" id="GO:0005184">
    <property type="term" value="F:neuropeptide hormone activity"/>
    <property type="evidence" value="ECO:0007669"/>
    <property type="project" value="InterPro"/>
</dbReference>
<dbReference type="GO" id="GO:0007218">
    <property type="term" value="P:neuropeptide signaling pathway"/>
    <property type="evidence" value="ECO:0007669"/>
    <property type="project" value="UniProtKB-KW"/>
</dbReference>
<dbReference type="InterPro" id="IPR001484">
    <property type="entry name" value="Pyrokinin_CS"/>
</dbReference>
<dbReference type="PROSITE" id="PS00539">
    <property type="entry name" value="PYROKININ"/>
    <property type="match status" value="1"/>
</dbReference>
<organism>
    <name type="scientific">Pilema dubia</name>
    <name type="common">Cockroach</name>
    <name type="synonym">Pilema reflexa</name>
    <dbReference type="NCBI Taxonomy" id="521525"/>
    <lineage>
        <taxon>Eukaryota</taxon>
        <taxon>Metazoa</taxon>
        <taxon>Ecdysozoa</taxon>
        <taxon>Arthropoda</taxon>
        <taxon>Hexapoda</taxon>
        <taxon>Insecta</taxon>
        <taxon>Pterygota</taxon>
        <taxon>Neoptera</taxon>
        <taxon>Polyneoptera</taxon>
        <taxon>Dictyoptera</taxon>
        <taxon>Blattodea</taxon>
        <taxon>Blaberoidea</taxon>
        <taxon>Blaberidae</taxon>
        <taxon>Perisphaerinae</taxon>
        <taxon>Pilema</taxon>
    </lineage>
</organism>
<feature type="peptide" id="PRO_0000378717" description="Pyrokinin-5" evidence="3">
    <location>
        <begin position="1"/>
        <end position="17"/>
    </location>
</feature>
<feature type="modified residue" description="Leucine amide" evidence="3">
    <location>
        <position position="17"/>
    </location>
</feature>
<name>PPK5_PILDU</name>
<sequence>SGETSGEGNGMWFGPRL</sequence>
<proteinExistence type="evidence at protein level"/>